<feature type="chain" id="PRO_1000032064" description="Elongation factor 4">
    <location>
        <begin position="1"/>
        <end position="598"/>
    </location>
</feature>
<feature type="domain" description="tr-type G">
    <location>
        <begin position="2"/>
        <end position="184"/>
    </location>
</feature>
<feature type="binding site" evidence="1">
    <location>
        <begin position="14"/>
        <end position="19"/>
    </location>
    <ligand>
        <name>GTP</name>
        <dbReference type="ChEBI" id="CHEBI:37565"/>
    </ligand>
</feature>
<feature type="binding site" evidence="1">
    <location>
        <begin position="131"/>
        <end position="134"/>
    </location>
    <ligand>
        <name>GTP</name>
        <dbReference type="ChEBI" id="CHEBI:37565"/>
    </ligand>
</feature>
<reference key="1">
    <citation type="submission" date="2006-10" db="EMBL/GenBank/DDBJ databases">
        <title>Complete sequence of Syntrophobacter fumaroxidans MPOB.</title>
        <authorList>
            <consortium name="US DOE Joint Genome Institute"/>
            <person name="Copeland A."/>
            <person name="Lucas S."/>
            <person name="Lapidus A."/>
            <person name="Barry K."/>
            <person name="Detter J.C."/>
            <person name="Glavina del Rio T."/>
            <person name="Hammon N."/>
            <person name="Israni S."/>
            <person name="Pitluck S."/>
            <person name="Goltsman E.G."/>
            <person name="Martinez M."/>
            <person name="Schmutz J."/>
            <person name="Larimer F."/>
            <person name="Land M."/>
            <person name="Hauser L."/>
            <person name="Kyrpides N."/>
            <person name="Kim E."/>
            <person name="Boone D.R."/>
            <person name="Brockman F."/>
            <person name="Culley D."/>
            <person name="Ferry J."/>
            <person name="Gunsalus R."/>
            <person name="McInerney M.J."/>
            <person name="Morrison M."/>
            <person name="Plugge C."/>
            <person name="Rohlin L."/>
            <person name="Scholten J."/>
            <person name="Sieber J."/>
            <person name="Stams A.J.M."/>
            <person name="Worm P."/>
            <person name="Henstra A.M."/>
            <person name="Richardson P."/>
        </authorList>
    </citation>
    <scope>NUCLEOTIDE SEQUENCE [LARGE SCALE GENOMIC DNA]</scope>
    <source>
        <strain>DSM 10017 / MPOB</strain>
    </source>
</reference>
<keyword id="KW-0997">Cell inner membrane</keyword>
<keyword id="KW-1003">Cell membrane</keyword>
<keyword id="KW-0342">GTP-binding</keyword>
<keyword id="KW-0378">Hydrolase</keyword>
<keyword id="KW-0472">Membrane</keyword>
<keyword id="KW-0547">Nucleotide-binding</keyword>
<keyword id="KW-0648">Protein biosynthesis</keyword>
<keyword id="KW-1185">Reference proteome</keyword>
<protein>
    <recommendedName>
        <fullName evidence="1">Elongation factor 4</fullName>
        <shortName evidence="1">EF-4</shortName>
        <ecNumber evidence="1">3.6.5.n1</ecNumber>
    </recommendedName>
    <alternativeName>
        <fullName evidence="1">Ribosomal back-translocase LepA</fullName>
    </alternativeName>
</protein>
<proteinExistence type="inferred from homology"/>
<sequence>MTKIRNFSIIAHIDHGKSTLADRLIQRAGLVTDRQFRDQILDNMDIERERGITIKSQTVTLPYRSRNGEEVELNLIDTPGHVDFSYEVSRALASCEGVLLLVDASQGVQAQTLANLYAAMEHDLTIIPVINKIDLLSADIENTRAQIESELGLDSSQAVLCSAKEGRGIDDVLEAVVDRIPPPSGKLDAPLSALIFDAHYDSFRGTIVACRVFDGSVRPGDVIRFMSNGATYKVEEVGVFRLSREPKKELRAGMVGYVISGVKTVSDTRVGDTITLDSNPVPAPLPGFKEVKPVVFSSIYPISSDDYLSLADSLEKYKLNDAALIYQKDSSVALGQGFRCGFLGLLHLEIVQERLEREYDQSIIMTFPSVQYVLTLEDGSTTMVDNPQYYPDPIRIRTSAEPFIKASIIIPERYMGAVMKLCLDKRGVNPRFNYPTPGRIEISMEMPLAEVVFDFYDKLKTVTQGYGSFDYDLIEHRVSDLVKLDILVNSEKVDALSLIVHRERAREWAVQVCDRLKEEIPRHQFKIAIQGAIGGKIIARSTVNAFRKDVTAKCYGGDISRKRKLLEKQKKGKKRMKMVGSVMIPQSAFVAVLKADNE</sequence>
<dbReference type="EC" id="3.6.5.n1" evidence="1"/>
<dbReference type="EMBL" id="CP000478">
    <property type="protein sequence ID" value="ABK17052.1"/>
    <property type="molecule type" value="Genomic_DNA"/>
</dbReference>
<dbReference type="RefSeq" id="WP_011698223.1">
    <property type="nucleotide sequence ID" value="NC_008554.1"/>
</dbReference>
<dbReference type="SMR" id="A0LI00"/>
<dbReference type="FunCoup" id="A0LI00">
    <property type="interactions" value="563"/>
</dbReference>
<dbReference type="STRING" id="335543.Sfum_1361"/>
<dbReference type="KEGG" id="sfu:Sfum_1361"/>
<dbReference type="eggNOG" id="COG0481">
    <property type="taxonomic scope" value="Bacteria"/>
</dbReference>
<dbReference type="HOGENOM" id="CLU_009995_3_3_7"/>
<dbReference type="InParanoid" id="A0LI00"/>
<dbReference type="OrthoDB" id="9760518at2"/>
<dbReference type="Proteomes" id="UP000001784">
    <property type="component" value="Chromosome"/>
</dbReference>
<dbReference type="GO" id="GO:0005886">
    <property type="term" value="C:plasma membrane"/>
    <property type="evidence" value="ECO:0007669"/>
    <property type="project" value="UniProtKB-SubCell"/>
</dbReference>
<dbReference type="GO" id="GO:0005525">
    <property type="term" value="F:GTP binding"/>
    <property type="evidence" value="ECO:0007669"/>
    <property type="project" value="UniProtKB-UniRule"/>
</dbReference>
<dbReference type="GO" id="GO:0003924">
    <property type="term" value="F:GTPase activity"/>
    <property type="evidence" value="ECO:0007669"/>
    <property type="project" value="UniProtKB-UniRule"/>
</dbReference>
<dbReference type="GO" id="GO:0043022">
    <property type="term" value="F:ribosome binding"/>
    <property type="evidence" value="ECO:0007669"/>
    <property type="project" value="UniProtKB-UniRule"/>
</dbReference>
<dbReference type="GO" id="GO:0003746">
    <property type="term" value="F:translation elongation factor activity"/>
    <property type="evidence" value="ECO:0007669"/>
    <property type="project" value="UniProtKB-UniRule"/>
</dbReference>
<dbReference type="GO" id="GO:0045727">
    <property type="term" value="P:positive regulation of translation"/>
    <property type="evidence" value="ECO:0007669"/>
    <property type="project" value="UniProtKB-UniRule"/>
</dbReference>
<dbReference type="CDD" id="cd03699">
    <property type="entry name" value="EF4_II"/>
    <property type="match status" value="1"/>
</dbReference>
<dbReference type="CDD" id="cd16260">
    <property type="entry name" value="EF4_III"/>
    <property type="match status" value="1"/>
</dbReference>
<dbReference type="CDD" id="cd01890">
    <property type="entry name" value="LepA"/>
    <property type="match status" value="1"/>
</dbReference>
<dbReference type="CDD" id="cd03709">
    <property type="entry name" value="lepA_C"/>
    <property type="match status" value="1"/>
</dbReference>
<dbReference type="FunFam" id="3.40.50.300:FF:000078">
    <property type="entry name" value="Elongation factor 4"/>
    <property type="match status" value="1"/>
</dbReference>
<dbReference type="FunFam" id="2.40.30.10:FF:000015">
    <property type="entry name" value="Translation factor GUF1, mitochondrial"/>
    <property type="match status" value="1"/>
</dbReference>
<dbReference type="FunFam" id="3.30.70.240:FF:000007">
    <property type="entry name" value="Translation factor GUF1, mitochondrial"/>
    <property type="match status" value="1"/>
</dbReference>
<dbReference type="FunFam" id="3.30.70.2570:FF:000001">
    <property type="entry name" value="Translation factor GUF1, mitochondrial"/>
    <property type="match status" value="1"/>
</dbReference>
<dbReference type="FunFam" id="3.30.70.870:FF:000004">
    <property type="entry name" value="Translation factor GUF1, mitochondrial"/>
    <property type="match status" value="1"/>
</dbReference>
<dbReference type="Gene3D" id="3.30.70.240">
    <property type="match status" value="1"/>
</dbReference>
<dbReference type="Gene3D" id="3.30.70.2570">
    <property type="entry name" value="Elongation factor 4, C-terminal domain"/>
    <property type="match status" value="1"/>
</dbReference>
<dbReference type="Gene3D" id="3.30.70.870">
    <property type="entry name" value="Elongation Factor G (Translational Gtpase), domain 3"/>
    <property type="match status" value="1"/>
</dbReference>
<dbReference type="Gene3D" id="3.40.50.300">
    <property type="entry name" value="P-loop containing nucleotide triphosphate hydrolases"/>
    <property type="match status" value="1"/>
</dbReference>
<dbReference type="Gene3D" id="2.40.30.10">
    <property type="entry name" value="Translation factors"/>
    <property type="match status" value="1"/>
</dbReference>
<dbReference type="HAMAP" id="MF_00071">
    <property type="entry name" value="LepA"/>
    <property type="match status" value="1"/>
</dbReference>
<dbReference type="InterPro" id="IPR006297">
    <property type="entry name" value="EF-4"/>
</dbReference>
<dbReference type="InterPro" id="IPR035647">
    <property type="entry name" value="EFG_III/V"/>
</dbReference>
<dbReference type="InterPro" id="IPR000640">
    <property type="entry name" value="EFG_V-like"/>
</dbReference>
<dbReference type="InterPro" id="IPR004161">
    <property type="entry name" value="EFTu-like_2"/>
</dbReference>
<dbReference type="InterPro" id="IPR031157">
    <property type="entry name" value="G_TR_CS"/>
</dbReference>
<dbReference type="InterPro" id="IPR038363">
    <property type="entry name" value="LepA_C_sf"/>
</dbReference>
<dbReference type="InterPro" id="IPR013842">
    <property type="entry name" value="LepA_CTD"/>
</dbReference>
<dbReference type="InterPro" id="IPR035654">
    <property type="entry name" value="LepA_IV"/>
</dbReference>
<dbReference type="InterPro" id="IPR027417">
    <property type="entry name" value="P-loop_NTPase"/>
</dbReference>
<dbReference type="InterPro" id="IPR005225">
    <property type="entry name" value="Small_GTP-bd"/>
</dbReference>
<dbReference type="InterPro" id="IPR000795">
    <property type="entry name" value="T_Tr_GTP-bd_dom"/>
</dbReference>
<dbReference type="InterPro" id="IPR009000">
    <property type="entry name" value="Transl_B-barrel_sf"/>
</dbReference>
<dbReference type="NCBIfam" id="TIGR01393">
    <property type="entry name" value="lepA"/>
    <property type="match status" value="1"/>
</dbReference>
<dbReference type="NCBIfam" id="TIGR00231">
    <property type="entry name" value="small_GTP"/>
    <property type="match status" value="1"/>
</dbReference>
<dbReference type="PANTHER" id="PTHR43512:SF4">
    <property type="entry name" value="TRANSLATION FACTOR GUF1 HOMOLOG, CHLOROPLASTIC"/>
    <property type="match status" value="1"/>
</dbReference>
<dbReference type="PANTHER" id="PTHR43512">
    <property type="entry name" value="TRANSLATION FACTOR GUF1-RELATED"/>
    <property type="match status" value="1"/>
</dbReference>
<dbReference type="Pfam" id="PF00679">
    <property type="entry name" value="EFG_C"/>
    <property type="match status" value="1"/>
</dbReference>
<dbReference type="Pfam" id="PF00009">
    <property type="entry name" value="GTP_EFTU"/>
    <property type="match status" value="1"/>
</dbReference>
<dbReference type="Pfam" id="PF03144">
    <property type="entry name" value="GTP_EFTU_D2"/>
    <property type="match status" value="1"/>
</dbReference>
<dbReference type="Pfam" id="PF06421">
    <property type="entry name" value="LepA_C"/>
    <property type="match status" value="1"/>
</dbReference>
<dbReference type="PRINTS" id="PR00315">
    <property type="entry name" value="ELONGATNFCT"/>
</dbReference>
<dbReference type="SUPFAM" id="SSF54980">
    <property type="entry name" value="EF-G C-terminal domain-like"/>
    <property type="match status" value="2"/>
</dbReference>
<dbReference type="SUPFAM" id="SSF52540">
    <property type="entry name" value="P-loop containing nucleoside triphosphate hydrolases"/>
    <property type="match status" value="1"/>
</dbReference>
<dbReference type="SUPFAM" id="SSF50447">
    <property type="entry name" value="Translation proteins"/>
    <property type="match status" value="1"/>
</dbReference>
<dbReference type="PROSITE" id="PS00301">
    <property type="entry name" value="G_TR_1"/>
    <property type="match status" value="1"/>
</dbReference>
<dbReference type="PROSITE" id="PS51722">
    <property type="entry name" value="G_TR_2"/>
    <property type="match status" value="1"/>
</dbReference>
<evidence type="ECO:0000255" key="1">
    <source>
        <dbReference type="HAMAP-Rule" id="MF_00071"/>
    </source>
</evidence>
<gene>
    <name evidence="1" type="primary">lepA</name>
    <name type="ordered locus">Sfum_1361</name>
</gene>
<organism>
    <name type="scientific">Syntrophobacter fumaroxidans (strain DSM 10017 / MPOB)</name>
    <dbReference type="NCBI Taxonomy" id="335543"/>
    <lineage>
        <taxon>Bacteria</taxon>
        <taxon>Pseudomonadati</taxon>
        <taxon>Thermodesulfobacteriota</taxon>
        <taxon>Syntrophobacteria</taxon>
        <taxon>Syntrophobacterales</taxon>
        <taxon>Syntrophobacteraceae</taxon>
        <taxon>Syntrophobacter</taxon>
    </lineage>
</organism>
<accession>A0LI00</accession>
<name>LEPA_SYNFM</name>
<comment type="function">
    <text evidence="1">Required for accurate and efficient protein synthesis under certain stress conditions. May act as a fidelity factor of the translation reaction, by catalyzing a one-codon backward translocation of tRNAs on improperly translocated ribosomes. Back-translocation proceeds from a post-translocation (POST) complex to a pre-translocation (PRE) complex, thus giving elongation factor G a second chance to translocate the tRNAs correctly. Binds to ribosomes in a GTP-dependent manner.</text>
</comment>
<comment type="catalytic activity">
    <reaction evidence="1">
        <text>GTP + H2O = GDP + phosphate + H(+)</text>
        <dbReference type="Rhea" id="RHEA:19669"/>
        <dbReference type="ChEBI" id="CHEBI:15377"/>
        <dbReference type="ChEBI" id="CHEBI:15378"/>
        <dbReference type="ChEBI" id="CHEBI:37565"/>
        <dbReference type="ChEBI" id="CHEBI:43474"/>
        <dbReference type="ChEBI" id="CHEBI:58189"/>
        <dbReference type="EC" id="3.6.5.n1"/>
    </reaction>
</comment>
<comment type="subcellular location">
    <subcellularLocation>
        <location evidence="1">Cell inner membrane</location>
        <topology evidence="1">Peripheral membrane protein</topology>
        <orientation evidence="1">Cytoplasmic side</orientation>
    </subcellularLocation>
</comment>
<comment type="similarity">
    <text evidence="1">Belongs to the TRAFAC class translation factor GTPase superfamily. Classic translation factor GTPase family. LepA subfamily.</text>
</comment>